<accession>P0C1X7</accession>
<accession>C9X4J4</accession>
<dbReference type="EMBL" id="FN392272">
    <property type="protein sequence ID" value="CAY61916.1"/>
    <property type="molecule type" value="mRNA"/>
</dbReference>
<dbReference type="EMBL" id="FN392280">
    <property type="protein sequence ID" value="CAY61933.1"/>
    <property type="molecule type" value="mRNA"/>
</dbReference>
<dbReference type="SMR" id="P0C1X7"/>
<dbReference type="GO" id="GO:0005576">
    <property type="term" value="C:extracellular region"/>
    <property type="evidence" value="ECO:0007669"/>
    <property type="project" value="UniProtKB-SubCell"/>
</dbReference>
<dbReference type="GO" id="GO:0019871">
    <property type="term" value="F:sodium channel inhibitor activity"/>
    <property type="evidence" value="ECO:0007669"/>
    <property type="project" value="InterPro"/>
</dbReference>
<dbReference type="GO" id="GO:0090729">
    <property type="term" value="F:toxin activity"/>
    <property type="evidence" value="ECO:0007669"/>
    <property type="project" value="UniProtKB-KW"/>
</dbReference>
<dbReference type="GO" id="GO:0042742">
    <property type="term" value="P:defense response to bacterium"/>
    <property type="evidence" value="ECO:0007669"/>
    <property type="project" value="UniProtKB-KW"/>
</dbReference>
<dbReference type="CDD" id="cd23106">
    <property type="entry name" value="neurotoxins_LC_scorpion"/>
    <property type="match status" value="1"/>
</dbReference>
<dbReference type="FunFam" id="3.30.30.10:FF:000002">
    <property type="entry name" value="Alpha-like toxin BmK-M1"/>
    <property type="match status" value="1"/>
</dbReference>
<dbReference type="Gene3D" id="3.30.30.10">
    <property type="entry name" value="Knottin, scorpion toxin-like"/>
    <property type="match status" value="1"/>
</dbReference>
<dbReference type="InterPro" id="IPR044062">
    <property type="entry name" value="LCN-type_CS_alpha_beta_dom"/>
</dbReference>
<dbReference type="InterPro" id="IPR003614">
    <property type="entry name" value="Scorpion_toxin-like"/>
</dbReference>
<dbReference type="InterPro" id="IPR036574">
    <property type="entry name" value="Scorpion_toxin-like_sf"/>
</dbReference>
<dbReference type="InterPro" id="IPR018218">
    <property type="entry name" value="Scorpion_toxinL"/>
</dbReference>
<dbReference type="InterPro" id="IPR002061">
    <property type="entry name" value="Scorpion_toxinL/defensin"/>
</dbReference>
<dbReference type="Pfam" id="PF00537">
    <property type="entry name" value="Toxin_3"/>
    <property type="match status" value="1"/>
</dbReference>
<dbReference type="PRINTS" id="PR00285">
    <property type="entry name" value="SCORPNTOXIN"/>
</dbReference>
<dbReference type="SMART" id="SM00505">
    <property type="entry name" value="Knot1"/>
    <property type="match status" value="1"/>
</dbReference>
<dbReference type="SUPFAM" id="SSF57095">
    <property type="entry name" value="Scorpion toxin-like"/>
    <property type="match status" value="1"/>
</dbReference>
<dbReference type="PROSITE" id="PS51863">
    <property type="entry name" value="LCN_CSAB"/>
    <property type="match status" value="1"/>
</dbReference>
<sequence length="83" mass="9506">MKGMIMLISCLMLIDVVVESKNGYIIEPKGCKYSCFWGSSTWCNRECKFKKGSSGYCAWPACWCYGLPDNVKIFDYYNNKCGK</sequence>
<protein>
    <recommendedName>
        <fullName>Ardiscretin</fullName>
    </recommendedName>
    <alternativeName>
        <fullName>PT-Arthr-beta* NaTx2.1</fullName>
    </alternativeName>
    <alternativeName>
        <fullName>Toxin TdNa4</fullName>
    </alternativeName>
</protein>
<proteinExistence type="evidence at protein level"/>
<reference key="1">
    <citation type="journal article" date="2004" name="Toxicon">
        <title>Ardiscretin a novel arthropod-selective toxin from Tityus discrepans scorpion venom.</title>
        <authorList>
            <person name="D'Suze G."/>
            <person name="Sevcik C."/>
            <person name="Corona M."/>
            <person name="Zamudio F.Z."/>
            <person name="Batista C.V.F."/>
            <person name="Coronas F.I."/>
            <person name="Possani L.D."/>
        </authorList>
    </citation>
    <scope>NUCLEOTIDE SEQUENCE [MRNA]</scope>
    <scope>PROTEIN SEQUENCE OF 21-81</scope>
    <scope>AMIDATION AT CYS-81</scope>
    <scope>FUNCTION</scope>
    <scope>MASS SPECTROMETRY</scope>
    <scope>SUBCELLULAR LOCATION</scope>
    <source>
        <tissue>Venom</tissue>
        <tissue>Venom gland</tissue>
    </source>
</reference>
<reference key="2">
    <citation type="journal article" date="2009" name="Biochimie">
        <title>Molecular cloning and nucleotide sequence analysis of genes from a cDNA library of the scorpion Tityus discrepans.</title>
        <authorList>
            <person name="D'Suze G."/>
            <person name="Schwartz E.F."/>
            <person name="Garcia-Gomez B.I."/>
            <person name="Sevcik C."/>
            <person name="Possani L.D."/>
        </authorList>
    </citation>
    <scope>NUCLEOTIDE SEQUENCE [MRNA]</scope>
    <source>
        <tissue>Venom gland</tissue>
    </source>
</reference>
<reference key="3">
    <citation type="journal article" date="2006" name="Proteomics">
        <title>Proteomic analysis of Tityus discrepans scorpion venom and amino acid sequence of novel toxins.</title>
        <authorList>
            <person name="Batista C.V.F."/>
            <person name="D'Suze G."/>
            <person name="Gomez-Lagunas F."/>
            <person name="Zamudio F.Z."/>
            <person name="Encarnacion S."/>
            <person name="Sevcik C."/>
            <person name="Possani L.D."/>
        </authorList>
    </citation>
    <scope>PROTEIN SEQUENCE OF 21-30</scope>
    <scope>MASS SPECTROMETRY</scope>
</reference>
<reference key="4">
    <citation type="journal article" date="2012" name="PLoS ONE">
        <title>Identification and phylogenetic analysis of Tityus pachyurus and Tityus obscurus novel putative Na+-channel scorpion toxins.</title>
        <authorList>
            <person name="Guerrero-Vargas J.A."/>
            <person name="Mourao C.B."/>
            <person name="Quintero-Hernandez V."/>
            <person name="Possani L.D."/>
            <person name="Schwartz E.F."/>
        </authorList>
    </citation>
    <scope>NOMENCLATURE</scope>
</reference>
<keyword id="KW-0027">Amidation</keyword>
<keyword id="KW-0044">Antibiotic</keyword>
<keyword id="KW-0929">Antimicrobial</keyword>
<keyword id="KW-0903">Direct protein sequencing</keyword>
<keyword id="KW-1015">Disulfide bond</keyword>
<keyword id="KW-0872">Ion channel impairing toxin</keyword>
<keyword id="KW-0528">Neurotoxin</keyword>
<keyword id="KW-0964">Secreted</keyword>
<keyword id="KW-0732">Signal</keyword>
<keyword id="KW-0800">Toxin</keyword>
<keyword id="KW-0738">Voltage-gated sodium channel impairing toxin</keyword>
<feature type="signal peptide" evidence="3 4">
    <location>
        <begin position="1"/>
        <end position="20"/>
    </location>
</feature>
<feature type="chain" id="PRO_0000250205" description="Ardiscretin" evidence="3">
    <location>
        <begin position="21"/>
        <end position="81"/>
    </location>
</feature>
<feature type="domain" description="LCN-type CS-alpha/beta" evidence="2">
    <location>
        <begin position="21"/>
        <end position="82"/>
    </location>
</feature>
<feature type="modified residue" description="Cysteine amide" evidence="3">
    <location>
        <position position="81"/>
    </location>
</feature>
<feature type="disulfide bond" evidence="2">
    <location>
        <begin position="31"/>
        <end position="81"/>
    </location>
</feature>
<feature type="disulfide bond" evidence="2">
    <location>
        <begin position="35"/>
        <end position="57"/>
    </location>
</feature>
<feature type="disulfide bond" evidence="2">
    <location>
        <begin position="43"/>
        <end position="62"/>
    </location>
</feature>
<feature type="disulfide bond" evidence="2">
    <location>
        <begin position="47"/>
        <end position="64"/>
    </location>
</feature>
<evidence type="ECO:0000250" key="1">
    <source>
        <dbReference type="UniProtKB" id="P0CF39"/>
    </source>
</evidence>
<evidence type="ECO:0000255" key="2">
    <source>
        <dbReference type="PROSITE-ProRule" id="PRU01210"/>
    </source>
</evidence>
<evidence type="ECO:0000269" key="3">
    <source>
    </source>
</evidence>
<evidence type="ECO:0000269" key="4">
    <source>
    </source>
</evidence>
<evidence type="ECO:0000305" key="5"/>
<evidence type="ECO:0000305" key="6">
    <source>
    </source>
</evidence>
<name>SCNA4_TITDI</name>
<comment type="function">
    <text evidence="1 3">Inhibits the sodium (Nav) currents in an apparent irreversible manner. Produces small depolarization and induces repetitive firing in squid axons. Is specific for arthropods (crickets, triatomides, crabs and squids), but is non-toxic to mice (PubMed:15033324). Shows antibacterial activity against both Gram-positive and Gram-negative bacteria (By similarity).</text>
</comment>
<comment type="subcellular location">
    <subcellularLocation>
        <location evidence="3">Secreted</location>
    </subcellularLocation>
</comment>
<comment type="tissue specificity">
    <text evidence="6">Expressed by the venom gland.</text>
</comment>
<comment type="domain">
    <text evidence="5">Has the structural arrangement of an alpha-helix connected to antiparallel beta-sheets by disulfide bonds (CS-alpha/beta).</text>
</comment>
<comment type="mass spectrometry" mass="7103.8" method="Electrospray" evidence="3 4"/>
<comment type="similarity">
    <text evidence="5">Belongs to the long (4 C-C) scorpion toxin superfamily. Sodium channel inhibitor family. Beta subfamily.</text>
</comment>
<organism>
    <name type="scientific">Tityus discrepans</name>
    <name type="common">Venezuelan scorpion</name>
    <dbReference type="NCBI Taxonomy" id="57059"/>
    <lineage>
        <taxon>Eukaryota</taxon>
        <taxon>Metazoa</taxon>
        <taxon>Ecdysozoa</taxon>
        <taxon>Arthropoda</taxon>
        <taxon>Chelicerata</taxon>
        <taxon>Arachnida</taxon>
        <taxon>Scorpiones</taxon>
        <taxon>Buthida</taxon>
        <taxon>Buthoidea</taxon>
        <taxon>Buthidae</taxon>
        <taxon>Tityus</taxon>
    </lineage>
</organism>